<proteinExistence type="inferred from homology"/>
<comment type="function">
    <text evidence="1">Involved in the binding of tRNA to the ribosomes.</text>
</comment>
<comment type="subunit">
    <text evidence="1">Part of the 30S ribosomal subunit.</text>
</comment>
<comment type="similarity">
    <text evidence="1">Belongs to the universal ribosomal protein uS10 family.</text>
</comment>
<evidence type="ECO:0000255" key="1">
    <source>
        <dbReference type="HAMAP-Rule" id="MF_00508"/>
    </source>
</evidence>
<evidence type="ECO:0000305" key="2"/>
<name>RS10_MYCMS</name>
<dbReference type="EMBL" id="BX293980">
    <property type="protein sequence ID" value="CAE77364.1"/>
    <property type="molecule type" value="Genomic_DNA"/>
</dbReference>
<dbReference type="RefSeq" id="NP_975722.1">
    <property type="nucleotide sequence ID" value="NC_005364.2"/>
</dbReference>
<dbReference type="RefSeq" id="WP_011166914.1">
    <property type="nucleotide sequence ID" value="NC_005364.2"/>
</dbReference>
<dbReference type="SMR" id="Q6MSM5"/>
<dbReference type="STRING" id="272632.MSC_0746"/>
<dbReference type="KEGG" id="mmy:MSC_0746"/>
<dbReference type="PATRIC" id="fig|272632.4.peg.803"/>
<dbReference type="eggNOG" id="COG0051">
    <property type="taxonomic scope" value="Bacteria"/>
</dbReference>
<dbReference type="HOGENOM" id="CLU_122625_1_3_14"/>
<dbReference type="Proteomes" id="UP000001016">
    <property type="component" value="Chromosome"/>
</dbReference>
<dbReference type="GO" id="GO:1990904">
    <property type="term" value="C:ribonucleoprotein complex"/>
    <property type="evidence" value="ECO:0007669"/>
    <property type="project" value="UniProtKB-KW"/>
</dbReference>
<dbReference type="GO" id="GO:0005840">
    <property type="term" value="C:ribosome"/>
    <property type="evidence" value="ECO:0007669"/>
    <property type="project" value="UniProtKB-KW"/>
</dbReference>
<dbReference type="GO" id="GO:0003735">
    <property type="term" value="F:structural constituent of ribosome"/>
    <property type="evidence" value="ECO:0007669"/>
    <property type="project" value="InterPro"/>
</dbReference>
<dbReference type="GO" id="GO:0000049">
    <property type="term" value="F:tRNA binding"/>
    <property type="evidence" value="ECO:0007669"/>
    <property type="project" value="UniProtKB-UniRule"/>
</dbReference>
<dbReference type="GO" id="GO:0006412">
    <property type="term" value="P:translation"/>
    <property type="evidence" value="ECO:0007669"/>
    <property type="project" value="UniProtKB-UniRule"/>
</dbReference>
<dbReference type="FunFam" id="3.30.70.600:FF:000003">
    <property type="entry name" value="30S ribosomal protein S10"/>
    <property type="match status" value="1"/>
</dbReference>
<dbReference type="Gene3D" id="3.30.70.600">
    <property type="entry name" value="Ribosomal protein S10 domain"/>
    <property type="match status" value="1"/>
</dbReference>
<dbReference type="HAMAP" id="MF_00508">
    <property type="entry name" value="Ribosomal_uS10"/>
    <property type="match status" value="1"/>
</dbReference>
<dbReference type="InterPro" id="IPR001848">
    <property type="entry name" value="Ribosomal_uS10"/>
</dbReference>
<dbReference type="InterPro" id="IPR018268">
    <property type="entry name" value="Ribosomal_uS10_CS"/>
</dbReference>
<dbReference type="InterPro" id="IPR027486">
    <property type="entry name" value="Ribosomal_uS10_dom"/>
</dbReference>
<dbReference type="InterPro" id="IPR036838">
    <property type="entry name" value="Ribosomal_uS10_dom_sf"/>
</dbReference>
<dbReference type="NCBIfam" id="NF001861">
    <property type="entry name" value="PRK00596.1"/>
    <property type="match status" value="1"/>
</dbReference>
<dbReference type="NCBIfam" id="TIGR01049">
    <property type="entry name" value="rpsJ_bact"/>
    <property type="match status" value="1"/>
</dbReference>
<dbReference type="PANTHER" id="PTHR11700">
    <property type="entry name" value="30S RIBOSOMAL PROTEIN S10 FAMILY MEMBER"/>
    <property type="match status" value="1"/>
</dbReference>
<dbReference type="Pfam" id="PF00338">
    <property type="entry name" value="Ribosomal_S10"/>
    <property type="match status" value="1"/>
</dbReference>
<dbReference type="PRINTS" id="PR00971">
    <property type="entry name" value="RIBOSOMALS10"/>
</dbReference>
<dbReference type="SMART" id="SM01403">
    <property type="entry name" value="Ribosomal_S10"/>
    <property type="match status" value="1"/>
</dbReference>
<dbReference type="SUPFAM" id="SSF54999">
    <property type="entry name" value="Ribosomal protein S10"/>
    <property type="match status" value="1"/>
</dbReference>
<dbReference type="PROSITE" id="PS00361">
    <property type="entry name" value="RIBOSOMAL_S10"/>
    <property type="match status" value="1"/>
</dbReference>
<feature type="chain" id="PRO_0000146555" description="Small ribosomal subunit protein uS10">
    <location>
        <begin position="1"/>
        <end position="102"/>
    </location>
</feature>
<reference key="1">
    <citation type="journal article" date="2004" name="Genome Res.">
        <title>The genome sequence of Mycoplasma mycoides subsp. mycoides SC type strain PG1T, the causative agent of contagious bovine pleuropneumonia (CBPP).</title>
        <authorList>
            <person name="Westberg J."/>
            <person name="Persson A."/>
            <person name="Holmberg A."/>
            <person name="Goesmann A."/>
            <person name="Lundeberg J."/>
            <person name="Johansson K.-E."/>
            <person name="Pettersson B."/>
            <person name="Uhlen M."/>
        </authorList>
    </citation>
    <scope>NUCLEOTIDE SEQUENCE [LARGE SCALE GENOMIC DNA]</scope>
    <source>
        <strain>CCUG 32753 / NCTC 10114 / PG1</strain>
    </source>
</reference>
<accession>Q6MSM5</accession>
<organism>
    <name type="scientific">Mycoplasma mycoides subsp. mycoides SC (strain CCUG 32753 / NCTC 10114 / PG1)</name>
    <dbReference type="NCBI Taxonomy" id="272632"/>
    <lineage>
        <taxon>Bacteria</taxon>
        <taxon>Bacillati</taxon>
        <taxon>Mycoplasmatota</taxon>
        <taxon>Mollicutes</taxon>
        <taxon>Mycoplasmataceae</taxon>
        <taxon>Mycoplasma</taxon>
    </lineage>
</organism>
<gene>
    <name evidence="1" type="primary">rpsJ</name>
    <name type="ordered locus">MSC_0746</name>
</gene>
<keyword id="KW-1185">Reference proteome</keyword>
<keyword id="KW-0687">Ribonucleoprotein</keyword>
<keyword id="KW-0689">Ribosomal protein</keyword>
<protein>
    <recommendedName>
        <fullName evidence="1">Small ribosomal subunit protein uS10</fullName>
    </recommendedName>
    <alternativeName>
        <fullName evidence="2">30S ribosomal protein S10</fullName>
    </alternativeName>
</protein>
<sequence>MAESKMRIKLKGYDHAIVDQSIVKIIQAAEGTGAKVRGPIPLPTEKQVITILRAVHKYKDSREQFDMRTHKRLLEILNPTAATMDILKRVQLPSGVDIEIKL</sequence>